<evidence type="ECO:0000255" key="1">
    <source>
        <dbReference type="HAMAP-Rule" id="MF_01416"/>
    </source>
</evidence>
<accession>Q2P7Q7</accession>
<protein>
    <recommendedName>
        <fullName evidence="1">ATP synthase subunit delta</fullName>
    </recommendedName>
    <alternativeName>
        <fullName evidence="1">ATP synthase F(1) sector subunit delta</fullName>
    </alternativeName>
    <alternativeName>
        <fullName evidence="1">F-type ATPase subunit delta</fullName>
        <shortName evidence="1">F-ATPase subunit delta</shortName>
    </alternativeName>
</protein>
<sequence>MSQALTLARPYGRAAFAIAREGGTFAPWSDALAFSAQVAGDPRVAALLLNPALGQEQAVTLLAPPQAGEDYLRFLGVLADAQRLSLLPEVAGLYEHLRAEAEHVVKATVTSAAAMSQTELDTIAAALKKRFGRDVDITTAVDASLIGGAVIDTGDVVIDGSLKGKLARLQSSLAH</sequence>
<feature type="chain" id="PRO_1000184837" description="ATP synthase subunit delta">
    <location>
        <begin position="1"/>
        <end position="175"/>
    </location>
</feature>
<reference key="1">
    <citation type="journal article" date="2005" name="Jpn. Agric. Res. Q.">
        <title>Genome sequence of Xanthomonas oryzae pv. oryzae suggests contribution of large numbers of effector genes and insertion sequences to its race diversity.</title>
        <authorList>
            <person name="Ochiai H."/>
            <person name="Inoue Y."/>
            <person name="Takeya M."/>
            <person name="Sasaki A."/>
            <person name="Kaku H."/>
        </authorList>
    </citation>
    <scope>NUCLEOTIDE SEQUENCE [LARGE SCALE GENOMIC DNA]</scope>
    <source>
        <strain>MAFF 311018</strain>
    </source>
</reference>
<keyword id="KW-0066">ATP synthesis</keyword>
<keyword id="KW-0997">Cell inner membrane</keyword>
<keyword id="KW-1003">Cell membrane</keyword>
<keyword id="KW-0139">CF(1)</keyword>
<keyword id="KW-0375">Hydrogen ion transport</keyword>
<keyword id="KW-0406">Ion transport</keyword>
<keyword id="KW-0472">Membrane</keyword>
<keyword id="KW-0813">Transport</keyword>
<organism>
    <name type="scientific">Xanthomonas oryzae pv. oryzae (strain MAFF 311018)</name>
    <dbReference type="NCBI Taxonomy" id="342109"/>
    <lineage>
        <taxon>Bacteria</taxon>
        <taxon>Pseudomonadati</taxon>
        <taxon>Pseudomonadota</taxon>
        <taxon>Gammaproteobacteria</taxon>
        <taxon>Lysobacterales</taxon>
        <taxon>Lysobacteraceae</taxon>
        <taxon>Xanthomonas</taxon>
    </lineage>
</organism>
<comment type="function">
    <text evidence="1">F(1)F(0) ATP synthase produces ATP from ADP in the presence of a proton or sodium gradient. F-type ATPases consist of two structural domains, F(1) containing the extramembraneous catalytic core and F(0) containing the membrane proton channel, linked together by a central stalk and a peripheral stalk. During catalysis, ATP synthesis in the catalytic domain of F(1) is coupled via a rotary mechanism of the central stalk subunits to proton translocation.</text>
</comment>
<comment type="function">
    <text evidence="1">This protein is part of the stalk that links CF(0) to CF(1). It either transmits conformational changes from CF(0) to CF(1) or is implicated in proton conduction.</text>
</comment>
<comment type="subunit">
    <text evidence="1">F-type ATPases have 2 components, F(1) - the catalytic core - and F(0) - the membrane proton channel. F(1) has five subunits: alpha(3), beta(3), gamma(1), delta(1), epsilon(1). F(0) has three main subunits: a(1), b(2) and c(10-14). The alpha and beta chains form an alternating ring which encloses part of the gamma chain. F(1) is attached to F(0) by a central stalk formed by the gamma and epsilon chains, while a peripheral stalk is formed by the delta and b chains.</text>
</comment>
<comment type="subcellular location">
    <subcellularLocation>
        <location evidence="1">Cell inner membrane</location>
        <topology evidence="1">Peripheral membrane protein</topology>
    </subcellularLocation>
</comment>
<comment type="similarity">
    <text evidence="1">Belongs to the ATPase delta chain family.</text>
</comment>
<name>ATPD_XANOM</name>
<dbReference type="EMBL" id="AP008229">
    <property type="protein sequence ID" value="BAE67420.1"/>
    <property type="molecule type" value="Genomic_DNA"/>
</dbReference>
<dbReference type="RefSeq" id="WP_011257622.1">
    <property type="nucleotide sequence ID" value="NC_007705.1"/>
</dbReference>
<dbReference type="SMR" id="Q2P7Q7"/>
<dbReference type="KEGG" id="xom:XOO0665"/>
<dbReference type="HOGENOM" id="CLU_085114_3_0_6"/>
<dbReference type="GO" id="GO:0005886">
    <property type="term" value="C:plasma membrane"/>
    <property type="evidence" value="ECO:0007669"/>
    <property type="project" value="UniProtKB-SubCell"/>
</dbReference>
<dbReference type="GO" id="GO:0045259">
    <property type="term" value="C:proton-transporting ATP synthase complex"/>
    <property type="evidence" value="ECO:0007669"/>
    <property type="project" value="UniProtKB-KW"/>
</dbReference>
<dbReference type="GO" id="GO:0046933">
    <property type="term" value="F:proton-transporting ATP synthase activity, rotational mechanism"/>
    <property type="evidence" value="ECO:0007669"/>
    <property type="project" value="UniProtKB-UniRule"/>
</dbReference>
<dbReference type="Gene3D" id="1.10.520.20">
    <property type="entry name" value="N-terminal domain of the delta subunit of the F1F0-ATP synthase"/>
    <property type="match status" value="1"/>
</dbReference>
<dbReference type="HAMAP" id="MF_01416">
    <property type="entry name" value="ATP_synth_delta_bact"/>
    <property type="match status" value="1"/>
</dbReference>
<dbReference type="InterPro" id="IPR026015">
    <property type="entry name" value="ATP_synth_OSCP/delta_N_sf"/>
</dbReference>
<dbReference type="InterPro" id="IPR000711">
    <property type="entry name" value="ATPase_OSCP/dsu"/>
</dbReference>
<dbReference type="NCBIfam" id="TIGR01145">
    <property type="entry name" value="ATP_synt_delta"/>
    <property type="match status" value="1"/>
</dbReference>
<dbReference type="NCBIfam" id="NF004402">
    <property type="entry name" value="PRK05758.2-2"/>
    <property type="match status" value="1"/>
</dbReference>
<dbReference type="PANTHER" id="PTHR11910">
    <property type="entry name" value="ATP SYNTHASE DELTA CHAIN"/>
    <property type="match status" value="1"/>
</dbReference>
<dbReference type="Pfam" id="PF00213">
    <property type="entry name" value="OSCP"/>
    <property type="match status" value="1"/>
</dbReference>
<dbReference type="PRINTS" id="PR00125">
    <property type="entry name" value="ATPASEDELTA"/>
</dbReference>
<dbReference type="SUPFAM" id="SSF47928">
    <property type="entry name" value="N-terminal domain of the delta subunit of the F1F0-ATP synthase"/>
    <property type="match status" value="1"/>
</dbReference>
<proteinExistence type="inferred from homology"/>
<gene>
    <name evidence="1" type="primary">atpH</name>
    <name type="ordered locus">XOO0665</name>
</gene>